<feature type="chain" id="PRO_0000364027" description="Zinc finger protein ZIC 2-B">
    <location>
        <begin position="1"/>
        <end position="497"/>
    </location>
</feature>
<feature type="zinc finger region" description="C2H2-type 1; atypical" evidence="4">
    <location>
        <begin position="273"/>
        <end position="308"/>
    </location>
</feature>
<feature type="zinc finger region" description="C2H2-type 2; atypical" evidence="4">
    <location>
        <begin position="317"/>
        <end position="344"/>
    </location>
</feature>
<feature type="zinc finger region" description="C2H2-type 3" evidence="4">
    <location>
        <begin position="350"/>
        <end position="374"/>
    </location>
</feature>
<feature type="zinc finger region" description="C2H2-type 4" evidence="4">
    <location>
        <begin position="380"/>
        <end position="404"/>
    </location>
</feature>
<feature type="zinc finger region" description="C2H2-type 5" evidence="4">
    <location>
        <begin position="410"/>
        <end position="432"/>
    </location>
</feature>
<feature type="region of interest" description="Disordered" evidence="5">
    <location>
        <begin position="58"/>
        <end position="107"/>
    </location>
</feature>
<feature type="region of interest" description="Disordered" evidence="5">
    <location>
        <begin position="143"/>
        <end position="180"/>
    </location>
</feature>
<feature type="region of interest" description="Disordered" evidence="5">
    <location>
        <begin position="423"/>
        <end position="473"/>
    </location>
</feature>
<feature type="compositionally biased region" description="Gly residues" evidence="5">
    <location>
        <begin position="66"/>
        <end position="88"/>
    </location>
</feature>
<feature type="compositionally biased region" description="Polar residues" evidence="5">
    <location>
        <begin position="97"/>
        <end position="107"/>
    </location>
</feature>
<feature type="compositionally biased region" description="Basic residues" evidence="5">
    <location>
        <begin position="161"/>
        <end position="171"/>
    </location>
</feature>
<feature type="compositionally biased region" description="Low complexity" evidence="5">
    <location>
        <begin position="434"/>
        <end position="452"/>
    </location>
</feature>
<feature type="compositionally biased region" description="Polar residues" evidence="5">
    <location>
        <begin position="459"/>
        <end position="469"/>
    </location>
</feature>
<gene>
    <name type="primary">zic2-b</name>
    <name evidence="8" type="synonym">sox-D</name>
</gene>
<evidence type="ECO:0000250" key="1"/>
<evidence type="ECO:0000250" key="2">
    <source>
        <dbReference type="UniProtKB" id="Q91689"/>
    </source>
</evidence>
<evidence type="ECO:0000255" key="3"/>
<evidence type="ECO:0000255" key="4">
    <source>
        <dbReference type="PROSITE-ProRule" id="PRU00042"/>
    </source>
</evidence>
<evidence type="ECO:0000256" key="5">
    <source>
        <dbReference type="SAM" id="MobiDB-lite"/>
    </source>
</evidence>
<evidence type="ECO:0000303" key="6">
    <source ref="1"/>
</evidence>
<evidence type="ECO:0000312" key="7">
    <source>
        <dbReference type="EMBL" id="AAH42229.1"/>
    </source>
</evidence>
<evidence type="ECO:0000312" key="8">
    <source>
        <dbReference type="EMBL" id="BAA34264.1"/>
    </source>
</evidence>
<accession>Q9YIB7</accession>
<proteinExistence type="evidence at transcript level"/>
<name>ZIC2B_XENLA</name>
<organism>
    <name type="scientific">Xenopus laevis</name>
    <name type="common">African clawed frog</name>
    <dbReference type="NCBI Taxonomy" id="8355"/>
    <lineage>
        <taxon>Eukaryota</taxon>
        <taxon>Metazoa</taxon>
        <taxon>Chordata</taxon>
        <taxon>Craniata</taxon>
        <taxon>Vertebrata</taxon>
        <taxon>Euteleostomi</taxon>
        <taxon>Amphibia</taxon>
        <taxon>Batrachia</taxon>
        <taxon>Anura</taxon>
        <taxon>Pipoidea</taxon>
        <taxon>Pipidae</taxon>
        <taxon>Xenopodinae</taxon>
        <taxon>Xenopus</taxon>
        <taxon>Xenopus</taxon>
    </lineage>
</organism>
<comment type="function">
    <text evidence="1">Transcriptional repressor that inhibits neurogenesis and induces neural and neural crest differentiation. Regulates anteroposterior patterning in early development by inhibiting expression of the nodal genes through the inhibition of vegt. Required for gastrulation movements and for proper anterior neural and axial development. May also act as a transcriptional activator. May bind to the minimal GLI-consensus sequence 5'-TGGGTGGTC-3' (By similarity).</text>
</comment>
<comment type="subcellular location">
    <subcellularLocation>
        <location evidence="2">Nucleus</location>
    </subcellularLocation>
    <subcellularLocation>
        <location evidence="1">Cytoplasm</location>
    </subcellularLocation>
</comment>
<comment type="domain">
    <text evidence="1">The C2H2-type 3, 4 and 5 zinc finger domains are necessary for transcription activation.</text>
</comment>
<comment type="similarity">
    <text evidence="3">Belongs to the GLI C2H2-type zinc-finger protein family.</text>
</comment>
<protein>
    <recommendedName>
        <fullName>Zinc finger protein ZIC 2-B</fullName>
    </recommendedName>
    <alternativeName>
        <fullName evidence="8">Zic-related-2</fullName>
        <shortName evidence="6">ZIC-R2</shortName>
    </alternativeName>
    <alternativeName>
        <fullName>Zinc finger protein of the cerebellum 2-B</fullName>
    </alternativeName>
</protein>
<sequence>MLLDAGPQFPALGVGTFARHHHHHHHHHAAVAAAAAAAAEMQERELSLAQNSFVEPTHMGAFKMNPGGGSGGGSGGGGGAGPNGGAGASGPHDLSPPGQTSAFTSQAGYPASALAPHSAYTGAAAFNSPRDFLFRGRGFAEGSAAAGGGQHGLFGPPAGSLHHHPHHHHQLSHGEHPQGHLLFPGIHDQHAAASQNTLGGQMRLGLPGEVFGRTDQYRQVSSPRGDPYTAAQLHNQYSPMNMGMNMAAHHHHHHHHPGAFFRYMRQQCIKQELICKWIDPEQLNNPKKSCNKTFSTMHELVTHMSVEHVGGPEQSNHICFWEECAREGKPFKAKYKLVNHIRVHTGEKPFPCPFPGCGKVFARSENLKIHKRTHTGEKPFQCEFEGCDRRFANSSDRKKHMHVHTSDKPYLCKMCDKSYTHPSSLRKHMKVHESSPQGSESSPAASSGYESSTPPGLVSPNSETQNPNLSPAAVSAVHSVSSGASGTLASNFNEWYV</sequence>
<dbReference type="EMBL" id="AB014461">
    <property type="protein sequence ID" value="BAA34264.1"/>
    <property type="molecule type" value="mRNA"/>
</dbReference>
<dbReference type="EMBL" id="BC042229">
    <property type="protein sequence ID" value="AAH42229.1"/>
    <property type="molecule type" value="mRNA"/>
</dbReference>
<dbReference type="RefSeq" id="NP_001079428.1">
    <property type="nucleotide sequence ID" value="NM_001085959.1"/>
</dbReference>
<dbReference type="SMR" id="Q9YIB7"/>
<dbReference type="DNASU" id="379115"/>
<dbReference type="GeneID" id="379115"/>
<dbReference type="KEGG" id="xla:379115"/>
<dbReference type="AGR" id="Xenbase:XB-GENE-6251643"/>
<dbReference type="CTD" id="379115"/>
<dbReference type="Xenbase" id="XB-GENE-6251643">
    <property type="gene designation" value="zic2.S"/>
</dbReference>
<dbReference type="OrthoDB" id="3214149at2759"/>
<dbReference type="Proteomes" id="UP000186698">
    <property type="component" value="Chromosome 2S"/>
</dbReference>
<dbReference type="Bgee" id="379115">
    <property type="expression patterns" value="Expressed in egg cell and 9 other cell types or tissues"/>
</dbReference>
<dbReference type="GO" id="GO:0005737">
    <property type="term" value="C:cytoplasm"/>
    <property type="evidence" value="ECO:0000250"/>
    <property type="project" value="UniProtKB"/>
</dbReference>
<dbReference type="GO" id="GO:0005634">
    <property type="term" value="C:nucleus"/>
    <property type="evidence" value="ECO:0000250"/>
    <property type="project" value="UniProtKB"/>
</dbReference>
<dbReference type="GO" id="GO:0031490">
    <property type="term" value="F:chromatin DNA binding"/>
    <property type="evidence" value="ECO:0000250"/>
    <property type="project" value="UniProtKB"/>
</dbReference>
<dbReference type="GO" id="GO:0003677">
    <property type="term" value="F:DNA binding"/>
    <property type="evidence" value="ECO:0000250"/>
    <property type="project" value="UniProtKB"/>
</dbReference>
<dbReference type="GO" id="GO:0003700">
    <property type="term" value="F:DNA-binding transcription factor activity"/>
    <property type="evidence" value="ECO:0000250"/>
    <property type="project" value="UniProtKB"/>
</dbReference>
<dbReference type="GO" id="GO:0000981">
    <property type="term" value="F:DNA-binding transcription factor activity, RNA polymerase II-specific"/>
    <property type="evidence" value="ECO:0000318"/>
    <property type="project" value="GO_Central"/>
</dbReference>
<dbReference type="GO" id="GO:0000978">
    <property type="term" value="F:RNA polymerase II cis-regulatory region sequence-specific DNA binding"/>
    <property type="evidence" value="ECO:0000318"/>
    <property type="project" value="GO_Central"/>
</dbReference>
<dbReference type="GO" id="GO:0008270">
    <property type="term" value="F:zinc ion binding"/>
    <property type="evidence" value="ECO:0007669"/>
    <property type="project" value="UniProtKB-KW"/>
</dbReference>
<dbReference type="GO" id="GO:0009952">
    <property type="term" value="P:anterior/posterior pattern specification"/>
    <property type="evidence" value="ECO:0000250"/>
    <property type="project" value="UniProtKB"/>
</dbReference>
<dbReference type="GO" id="GO:0042074">
    <property type="term" value="P:cell migration involved in gastrulation"/>
    <property type="evidence" value="ECO:0000250"/>
    <property type="project" value="UniProtKB"/>
</dbReference>
<dbReference type="GO" id="GO:0007417">
    <property type="term" value="P:central nervous system development"/>
    <property type="evidence" value="ECO:0000318"/>
    <property type="project" value="GO_Central"/>
</dbReference>
<dbReference type="GO" id="GO:0045892">
    <property type="term" value="P:negative regulation of DNA-templated transcription"/>
    <property type="evidence" value="ECO:0000250"/>
    <property type="project" value="UniProtKB"/>
</dbReference>
<dbReference type="GO" id="GO:0050768">
    <property type="term" value="P:negative regulation of neurogenesis"/>
    <property type="evidence" value="ECO:0000250"/>
    <property type="project" value="UniProtKB"/>
</dbReference>
<dbReference type="GO" id="GO:0000122">
    <property type="term" value="P:negative regulation of transcription by RNA polymerase II"/>
    <property type="evidence" value="ECO:0000250"/>
    <property type="project" value="UniProtKB"/>
</dbReference>
<dbReference type="GO" id="GO:0014034">
    <property type="term" value="P:neural crest cell fate commitment"/>
    <property type="evidence" value="ECO:0000250"/>
    <property type="project" value="UniProtKB"/>
</dbReference>
<dbReference type="GO" id="GO:0014029">
    <property type="term" value="P:neural crest formation"/>
    <property type="evidence" value="ECO:0000250"/>
    <property type="project" value="UniProtKB"/>
</dbReference>
<dbReference type="GO" id="GO:0051091">
    <property type="term" value="P:positive regulation of DNA-binding transcription factor activity"/>
    <property type="evidence" value="ECO:0000250"/>
    <property type="project" value="UniProtKB"/>
</dbReference>
<dbReference type="GO" id="GO:0045893">
    <property type="term" value="P:positive regulation of DNA-templated transcription"/>
    <property type="evidence" value="ECO:0000250"/>
    <property type="project" value="UniProtKB"/>
</dbReference>
<dbReference type="GO" id="GO:0006357">
    <property type="term" value="P:regulation of transcription by RNA polymerase II"/>
    <property type="evidence" value="ECO:0000318"/>
    <property type="project" value="GO_Central"/>
</dbReference>
<dbReference type="GO" id="GO:0007601">
    <property type="term" value="P:visual perception"/>
    <property type="evidence" value="ECO:0000250"/>
    <property type="project" value="UniProtKB"/>
</dbReference>
<dbReference type="FunFam" id="3.30.160.60:FF:000035">
    <property type="entry name" value="Zinc finger protein ZIC 1"/>
    <property type="match status" value="1"/>
</dbReference>
<dbReference type="FunFam" id="3.30.160.60:FF:000039">
    <property type="entry name" value="Zinc finger protein ZIC 1"/>
    <property type="match status" value="1"/>
</dbReference>
<dbReference type="FunFam" id="3.30.160.60:FF:000041">
    <property type="entry name" value="Zinc finger protein ZIC 1"/>
    <property type="match status" value="1"/>
</dbReference>
<dbReference type="FunFam" id="3.30.160.60:FF:001330">
    <property type="entry name" value="Zinc finger protein ZIC 4"/>
    <property type="match status" value="1"/>
</dbReference>
<dbReference type="Gene3D" id="3.30.160.60">
    <property type="entry name" value="Classic Zinc Finger"/>
    <property type="match status" value="4"/>
</dbReference>
<dbReference type="InterPro" id="IPR043359">
    <property type="entry name" value="GLI-like"/>
</dbReference>
<dbReference type="InterPro" id="IPR056436">
    <property type="entry name" value="Znf-C2H2_ZIC1-5/GLI1-3-like"/>
</dbReference>
<dbReference type="InterPro" id="IPR036236">
    <property type="entry name" value="Znf_C2H2_sf"/>
</dbReference>
<dbReference type="InterPro" id="IPR013087">
    <property type="entry name" value="Znf_C2H2_type"/>
</dbReference>
<dbReference type="InterPro" id="IPR041643">
    <property type="entry name" value="Znf_ZIC"/>
</dbReference>
<dbReference type="PANTHER" id="PTHR45718:SF8">
    <property type="entry name" value="GLIS FAMILY ZINC FINGER 2"/>
    <property type="match status" value="1"/>
</dbReference>
<dbReference type="PANTHER" id="PTHR45718">
    <property type="entry name" value="TRANSCRIPTIONAL ACTIVATOR CUBITUS INTERRUPTUS"/>
    <property type="match status" value="1"/>
</dbReference>
<dbReference type="Pfam" id="PF00096">
    <property type="entry name" value="zf-C2H2"/>
    <property type="match status" value="3"/>
</dbReference>
<dbReference type="Pfam" id="PF23561">
    <property type="entry name" value="zf-C2H2_15"/>
    <property type="match status" value="1"/>
</dbReference>
<dbReference type="Pfam" id="PF18366">
    <property type="entry name" value="zf_ZIC"/>
    <property type="match status" value="1"/>
</dbReference>
<dbReference type="SMART" id="SM00355">
    <property type="entry name" value="ZnF_C2H2"/>
    <property type="match status" value="5"/>
</dbReference>
<dbReference type="SUPFAM" id="SSF57667">
    <property type="entry name" value="beta-beta-alpha zinc fingers"/>
    <property type="match status" value="2"/>
</dbReference>
<dbReference type="PROSITE" id="PS00028">
    <property type="entry name" value="ZINC_FINGER_C2H2_1"/>
    <property type="match status" value="3"/>
</dbReference>
<dbReference type="PROSITE" id="PS50157">
    <property type="entry name" value="ZINC_FINGER_C2H2_2"/>
    <property type="match status" value="4"/>
</dbReference>
<reference evidence="8" key="1">
    <citation type="submission" date="1998-05" db="EMBL/GenBank/DDBJ databases">
        <title>Xenopus Zic-related-2; an early positive regulator of neural differentiation.</title>
        <authorList>
            <person name="Mizuseki K."/>
            <person name="Yamazaki H."/>
            <person name="Sasai Y."/>
        </authorList>
    </citation>
    <scope>NUCLEOTIDE SEQUENCE [MRNA]</scope>
    <source>
        <tissue evidence="8">Neuroectoderm</tissue>
        <tissue evidence="8">Neurula</tissue>
    </source>
</reference>
<reference evidence="8" key="2">
    <citation type="submission" date="2003-01" db="EMBL/GenBank/DDBJ databases">
        <authorList>
            <consortium name="NIH - Xenopus Gene Collection (XGC) project"/>
        </authorList>
    </citation>
    <scope>NUCLEOTIDE SEQUENCE [LARGE SCALE MRNA]</scope>
    <source>
        <tissue evidence="7">Tail bud</tissue>
    </source>
</reference>
<keyword id="KW-0010">Activator</keyword>
<keyword id="KW-0963">Cytoplasm</keyword>
<keyword id="KW-0217">Developmental protein</keyword>
<keyword id="KW-0221">Differentiation</keyword>
<keyword id="KW-0238">DNA-binding</keyword>
<keyword id="KW-0306">Gastrulation</keyword>
<keyword id="KW-0479">Metal-binding</keyword>
<keyword id="KW-0524">Neurogenesis</keyword>
<keyword id="KW-0539">Nucleus</keyword>
<keyword id="KW-1185">Reference proteome</keyword>
<keyword id="KW-0677">Repeat</keyword>
<keyword id="KW-0678">Repressor</keyword>
<keyword id="KW-0804">Transcription</keyword>
<keyword id="KW-0805">Transcription regulation</keyword>
<keyword id="KW-0862">Zinc</keyword>
<keyword id="KW-0863">Zinc-finger</keyword>